<gene>
    <name evidence="1" type="primary">rplU</name>
    <name type="ordered locus">NE1293</name>
</gene>
<evidence type="ECO:0000255" key="1">
    <source>
        <dbReference type="HAMAP-Rule" id="MF_01363"/>
    </source>
</evidence>
<evidence type="ECO:0000305" key="2"/>
<proteinExistence type="inferred from homology"/>
<name>RL21_NITEU</name>
<comment type="function">
    <text evidence="1">This protein binds to 23S rRNA in the presence of protein L20.</text>
</comment>
<comment type="subunit">
    <text evidence="1">Part of the 50S ribosomal subunit. Contacts protein L20.</text>
</comment>
<comment type="similarity">
    <text evidence="1">Belongs to the bacterial ribosomal protein bL21 family.</text>
</comment>
<dbReference type="EMBL" id="AL954747">
    <property type="protein sequence ID" value="CAD85204.1"/>
    <property type="molecule type" value="Genomic_DNA"/>
</dbReference>
<dbReference type="RefSeq" id="WP_011111871.1">
    <property type="nucleotide sequence ID" value="NC_004757.1"/>
</dbReference>
<dbReference type="SMR" id="Q82V18"/>
<dbReference type="STRING" id="228410.NE1293"/>
<dbReference type="GeneID" id="87104468"/>
<dbReference type="KEGG" id="neu:NE1293"/>
<dbReference type="eggNOG" id="COG0261">
    <property type="taxonomic scope" value="Bacteria"/>
</dbReference>
<dbReference type="HOGENOM" id="CLU_061463_3_2_4"/>
<dbReference type="OrthoDB" id="9813334at2"/>
<dbReference type="PhylomeDB" id="Q82V18"/>
<dbReference type="Proteomes" id="UP000001416">
    <property type="component" value="Chromosome"/>
</dbReference>
<dbReference type="GO" id="GO:0005737">
    <property type="term" value="C:cytoplasm"/>
    <property type="evidence" value="ECO:0007669"/>
    <property type="project" value="UniProtKB-ARBA"/>
</dbReference>
<dbReference type="GO" id="GO:1990904">
    <property type="term" value="C:ribonucleoprotein complex"/>
    <property type="evidence" value="ECO:0007669"/>
    <property type="project" value="UniProtKB-KW"/>
</dbReference>
<dbReference type="GO" id="GO:0005840">
    <property type="term" value="C:ribosome"/>
    <property type="evidence" value="ECO:0007669"/>
    <property type="project" value="UniProtKB-KW"/>
</dbReference>
<dbReference type="GO" id="GO:0019843">
    <property type="term" value="F:rRNA binding"/>
    <property type="evidence" value="ECO:0007669"/>
    <property type="project" value="UniProtKB-UniRule"/>
</dbReference>
<dbReference type="GO" id="GO:0003735">
    <property type="term" value="F:structural constituent of ribosome"/>
    <property type="evidence" value="ECO:0007669"/>
    <property type="project" value="InterPro"/>
</dbReference>
<dbReference type="GO" id="GO:0006412">
    <property type="term" value="P:translation"/>
    <property type="evidence" value="ECO:0007669"/>
    <property type="project" value="UniProtKB-UniRule"/>
</dbReference>
<dbReference type="HAMAP" id="MF_01363">
    <property type="entry name" value="Ribosomal_bL21"/>
    <property type="match status" value="1"/>
</dbReference>
<dbReference type="InterPro" id="IPR028909">
    <property type="entry name" value="bL21-like"/>
</dbReference>
<dbReference type="InterPro" id="IPR036164">
    <property type="entry name" value="bL21-like_sf"/>
</dbReference>
<dbReference type="InterPro" id="IPR001787">
    <property type="entry name" value="Ribosomal_bL21"/>
</dbReference>
<dbReference type="InterPro" id="IPR018258">
    <property type="entry name" value="Ribosomal_bL21_CS"/>
</dbReference>
<dbReference type="NCBIfam" id="TIGR00061">
    <property type="entry name" value="L21"/>
    <property type="match status" value="1"/>
</dbReference>
<dbReference type="PANTHER" id="PTHR21349">
    <property type="entry name" value="50S RIBOSOMAL PROTEIN L21"/>
    <property type="match status" value="1"/>
</dbReference>
<dbReference type="PANTHER" id="PTHR21349:SF0">
    <property type="entry name" value="LARGE RIBOSOMAL SUBUNIT PROTEIN BL21M"/>
    <property type="match status" value="1"/>
</dbReference>
<dbReference type="Pfam" id="PF00829">
    <property type="entry name" value="Ribosomal_L21p"/>
    <property type="match status" value="1"/>
</dbReference>
<dbReference type="SUPFAM" id="SSF141091">
    <property type="entry name" value="L21p-like"/>
    <property type="match status" value="1"/>
</dbReference>
<dbReference type="PROSITE" id="PS01169">
    <property type="entry name" value="RIBOSOMAL_L21"/>
    <property type="match status" value="1"/>
</dbReference>
<protein>
    <recommendedName>
        <fullName evidence="1">Large ribosomal subunit protein bL21</fullName>
    </recommendedName>
    <alternativeName>
        <fullName evidence="2">50S ribosomal protein L21</fullName>
    </alternativeName>
</protein>
<feature type="chain" id="PRO_0000269351" description="Large ribosomal subunit protein bL21">
    <location>
        <begin position="1"/>
        <end position="103"/>
    </location>
</feature>
<accession>Q82V18</accession>
<organism>
    <name type="scientific">Nitrosomonas europaea (strain ATCC 19718 / CIP 103999 / KCTC 2705 / NBRC 14298)</name>
    <dbReference type="NCBI Taxonomy" id="228410"/>
    <lineage>
        <taxon>Bacteria</taxon>
        <taxon>Pseudomonadati</taxon>
        <taxon>Pseudomonadota</taxon>
        <taxon>Betaproteobacteria</taxon>
        <taxon>Nitrosomonadales</taxon>
        <taxon>Nitrosomonadaceae</taxon>
        <taxon>Nitrosomonas</taxon>
    </lineage>
</organism>
<reference key="1">
    <citation type="journal article" date="2003" name="J. Bacteriol.">
        <title>Complete genome sequence of the ammonia-oxidizing bacterium and obligate chemolithoautotroph Nitrosomonas europaea.</title>
        <authorList>
            <person name="Chain P."/>
            <person name="Lamerdin J.E."/>
            <person name="Larimer F.W."/>
            <person name="Regala W."/>
            <person name="Lao V."/>
            <person name="Land M.L."/>
            <person name="Hauser L."/>
            <person name="Hooper A.B."/>
            <person name="Klotz M.G."/>
            <person name="Norton J."/>
            <person name="Sayavedra-Soto L.A."/>
            <person name="Arciero D.M."/>
            <person name="Hommes N.G."/>
            <person name="Whittaker M.M."/>
            <person name="Arp D.J."/>
        </authorList>
    </citation>
    <scope>NUCLEOTIDE SEQUENCE [LARGE SCALE GENOMIC DNA]</scope>
    <source>
        <strain>ATCC 19718 / CIP 103999 / KCTC 2705 / NBRC 14298</strain>
    </source>
</reference>
<sequence length="103" mass="11515">MYAVIKTGGKQYRVEVGNKLKVETLPAEVGSDIQLDQVLMIADGEAISAGAPLLDQAKVSATVVSHGRHDKIRIFKMRRRKHYRKQQGHRQNYTEIQITGISA</sequence>
<keyword id="KW-1185">Reference proteome</keyword>
<keyword id="KW-0687">Ribonucleoprotein</keyword>
<keyword id="KW-0689">Ribosomal protein</keyword>
<keyword id="KW-0694">RNA-binding</keyword>
<keyword id="KW-0699">rRNA-binding</keyword>